<proteinExistence type="inferred from homology"/>
<reference key="1">
    <citation type="journal article" date="2005" name="Physiol. Genomics">
        <title>Cross-species analysis of the mammalian beta-defensin gene family: presence of syntenic gene clusters and preferential expression in the male reproductive tract.</title>
        <authorList>
            <person name="Patil A.A."/>
            <person name="Cai Y."/>
            <person name="Sang Y."/>
            <person name="Blecha F."/>
            <person name="Zhang G."/>
        </authorList>
    </citation>
    <scope>NUCLEOTIDE SEQUENCE [MRNA]</scope>
</reference>
<comment type="function">
    <text evidence="1">Has antibacterial activity.</text>
</comment>
<comment type="subcellular location">
    <subcellularLocation>
        <location evidence="1">Secreted</location>
    </subcellularLocation>
</comment>
<comment type="similarity">
    <text evidence="3">Belongs to the beta-defensin family.</text>
</comment>
<sequence>MAKWILLIVALLVLGHVPSGSTEFKRCWNGQGACRTYCTRQEKFIHLCPDASLCCLSYSLKASPHSRAGGV</sequence>
<name>DFB25_RAT</name>
<accession>Q32ZG7</accession>
<evidence type="ECO:0000250" key="1"/>
<evidence type="ECO:0000255" key="2"/>
<evidence type="ECO:0000305" key="3"/>
<gene>
    <name type="primary">Defb25</name>
</gene>
<feature type="signal peptide" evidence="2">
    <location>
        <begin position="1"/>
        <end position="22"/>
    </location>
</feature>
<feature type="chain" id="PRO_0000352708" description="Beta-defensin 25">
    <location>
        <begin position="23"/>
        <end position="71"/>
    </location>
</feature>
<feature type="disulfide bond" evidence="1">
    <location>
        <begin position="27"/>
        <end position="54"/>
    </location>
</feature>
<feature type="disulfide bond" evidence="1">
    <location>
        <begin position="34"/>
        <end position="48"/>
    </location>
</feature>
<feature type="disulfide bond" evidence="1">
    <location>
        <begin position="38"/>
        <end position="55"/>
    </location>
</feature>
<organism>
    <name type="scientific">Rattus norvegicus</name>
    <name type="common">Rat</name>
    <dbReference type="NCBI Taxonomy" id="10116"/>
    <lineage>
        <taxon>Eukaryota</taxon>
        <taxon>Metazoa</taxon>
        <taxon>Chordata</taxon>
        <taxon>Craniata</taxon>
        <taxon>Vertebrata</taxon>
        <taxon>Euteleostomi</taxon>
        <taxon>Mammalia</taxon>
        <taxon>Eutheria</taxon>
        <taxon>Euarchontoglires</taxon>
        <taxon>Glires</taxon>
        <taxon>Rodentia</taxon>
        <taxon>Myomorpha</taxon>
        <taxon>Muroidea</taxon>
        <taxon>Muridae</taxon>
        <taxon>Murinae</taxon>
        <taxon>Rattus</taxon>
    </lineage>
</organism>
<protein>
    <recommendedName>
        <fullName>Beta-defensin 25</fullName>
        <shortName>BD-25</shortName>
    </recommendedName>
    <alternativeName>
        <fullName>Defensin, beta 25</fullName>
    </alternativeName>
</protein>
<keyword id="KW-0044">Antibiotic</keyword>
<keyword id="KW-0929">Antimicrobial</keyword>
<keyword id="KW-0211">Defensin</keyword>
<keyword id="KW-1015">Disulfide bond</keyword>
<keyword id="KW-1185">Reference proteome</keyword>
<keyword id="KW-0964">Secreted</keyword>
<keyword id="KW-0732">Signal</keyword>
<dbReference type="EMBL" id="AY621356">
    <property type="protein sequence ID" value="AAT51895.1"/>
    <property type="molecule type" value="mRNA"/>
</dbReference>
<dbReference type="RefSeq" id="NP_001032605.1">
    <property type="nucleotide sequence ID" value="NM_001037516.2"/>
</dbReference>
<dbReference type="SMR" id="Q32ZG7"/>
<dbReference type="STRING" id="10116.ENSRNOP00000052274"/>
<dbReference type="PhosphoSitePlus" id="Q32ZG7"/>
<dbReference type="PaxDb" id="10116-ENSRNOP00000052274"/>
<dbReference type="Ensembl" id="ENSRNOT00000055406.2">
    <property type="protein sequence ID" value="ENSRNOP00000052274.1"/>
    <property type="gene ID" value="ENSRNOG00000036895.2"/>
</dbReference>
<dbReference type="GeneID" id="641644"/>
<dbReference type="KEGG" id="rno:641644"/>
<dbReference type="UCSC" id="RGD:1564765">
    <property type="organism name" value="rat"/>
</dbReference>
<dbReference type="AGR" id="RGD:1564765"/>
<dbReference type="CTD" id="654459"/>
<dbReference type="RGD" id="1564765">
    <property type="gene designation" value="Defb25"/>
</dbReference>
<dbReference type="eggNOG" id="ENOG502TF15">
    <property type="taxonomic scope" value="Eukaryota"/>
</dbReference>
<dbReference type="GeneTree" id="ENSGT00530000064308"/>
<dbReference type="HOGENOM" id="CLU_181906_4_0_1"/>
<dbReference type="InParanoid" id="Q32ZG7"/>
<dbReference type="OMA" id="FMHLCPD"/>
<dbReference type="OrthoDB" id="9796954at2759"/>
<dbReference type="PhylomeDB" id="Q32ZG7"/>
<dbReference type="Reactome" id="R-RNO-1461957">
    <property type="pathway name" value="Beta defensins"/>
</dbReference>
<dbReference type="Reactome" id="R-RNO-1461973">
    <property type="pathway name" value="Defensins"/>
</dbReference>
<dbReference type="PRO" id="PR:Q32ZG7"/>
<dbReference type="Proteomes" id="UP000002494">
    <property type="component" value="Chromosome 3"/>
</dbReference>
<dbReference type="Bgee" id="ENSRNOG00000036895">
    <property type="expression patterns" value="Expressed in colon and 8 other cell types or tissues"/>
</dbReference>
<dbReference type="GO" id="GO:0005576">
    <property type="term" value="C:extracellular region"/>
    <property type="evidence" value="ECO:0007669"/>
    <property type="project" value="UniProtKB-SubCell"/>
</dbReference>
<dbReference type="GO" id="GO:0042742">
    <property type="term" value="P:defense response to bacterium"/>
    <property type="evidence" value="ECO:0007669"/>
    <property type="project" value="UniProtKB-KW"/>
</dbReference>
<dbReference type="GO" id="GO:0045087">
    <property type="term" value="P:innate immune response"/>
    <property type="evidence" value="ECO:0007669"/>
    <property type="project" value="InterPro"/>
</dbReference>
<dbReference type="Gene3D" id="3.10.360.10">
    <property type="entry name" value="Antimicrobial Peptide, Beta-defensin 2, Chain A"/>
    <property type="match status" value="1"/>
</dbReference>
<dbReference type="InterPro" id="IPR025933">
    <property type="entry name" value="Beta_defensin_dom"/>
</dbReference>
<dbReference type="PANTHER" id="PTHR47897">
    <property type="entry name" value="BETA-DEFENSIN 124"/>
    <property type="match status" value="1"/>
</dbReference>
<dbReference type="PANTHER" id="PTHR47897:SF1">
    <property type="entry name" value="BETA-DEFENSIN 124"/>
    <property type="match status" value="1"/>
</dbReference>
<dbReference type="Pfam" id="PF13841">
    <property type="entry name" value="Defensin_beta_2"/>
    <property type="match status" value="1"/>
</dbReference>